<dbReference type="EMBL" id="CP000083">
    <property type="protein sequence ID" value="AAZ28065.1"/>
    <property type="molecule type" value="Genomic_DNA"/>
</dbReference>
<dbReference type="RefSeq" id="WP_011044312.1">
    <property type="nucleotide sequence ID" value="NC_003910.7"/>
</dbReference>
<dbReference type="SMR" id="Q47Y94"/>
<dbReference type="STRING" id="167879.CPS_3552"/>
<dbReference type="KEGG" id="cps:CPS_3552"/>
<dbReference type="eggNOG" id="COG0216">
    <property type="taxonomic scope" value="Bacteria"/>
</dbReference>
<dbReference type="HOGENOM" id="CLU_036856_0_1_6"/>
<dbReference type="Proteomes" id="UP000000547">
    <property type="component" value="Chromosome"/>
</dbReference>
<dbReference type="GO" id="GO:0005737">
    <property type="term" value="C:cytoplasm"/>
    <property type="evidence" value="ECO:0007669"/>
    <property type="project" value="UniProtKB-SubCell"/>
</dbReference>
<dbReference type="GO" id="GO:0016149">
    <property type="term" value="F:translation release factor activity, codon specific"/>
    <property type="evidence" value="ECO:0007669"/>
    <property type="project" value="UniProtKB-UniRule"/>
</dbReference>
<dbReference type="FunFam" id="3.30.160.20:FF:000004">
    <property type="entry name" value="Peptide chain release factor 1"/>
    <property type="match status" value="1"/>
</dbReference>
<dbReference type="FunFam" id="3.30.70.1660:FF:000002">
    <property type="entry name" value="Peptide chain release factor 1"/>
    <property type="match status" value="1"/>
</dbReference>
<dbReference type="FunFam" id="3.30.70.1660:FF:000004">
    <property type="entry name" value="Peptide chain release factor 1"/>
    <property type="match status" value="1"/>
</dbReference>
<dbReference type="Gene3D" id="3.30.160.20">
    <property type="match status" value="1"/>
</dbReference>
<dbReference type="Gene3D" id="3.30.70.1660">
    <property type="match status" value="1"/>
</dbReference>
<dbReference type="Gene3D" id="6.10.140.1950">
    <property type="match status" value="1"/>
</dbReference>
<dbReference type="HAMAP" id="MF_00093">
    <property type="entry name" value="Rel_fac_1"/>
    <property type="match status" value="1"/>
</dbReference>
<dbReference type="InterPro" id="IPR005139">
    <property type="entry name" value="PCRF"/>
</dbReference>
<dbReference type="InterPro" id="IPR000352">
    <property type="entry name" value="Pep_chain_release_fac_I"/>
</dbReference>
<dbReference type="InterPro" id="IPR045853">
    <property type="entry name" value="Pep_chain_release_fac_I_sf"/>
</dbReference>
<dbReference type="InterPro" id="IPR050057">
    <property type="entry name" value="Prokaryotic/Mito_RF"/>
</dbReference>
<dbReference type="InterPro" id="IPR004373">
    <property type="entry name" value="RF-1"/>
</dbReference>
<dbReference type="NCBIfam" id="TIGR00019">
    <property type="entry name" value="prfA"/>
    <property type="match status" value="1"/>
</dbReference>
<dbReference type="NCBIfam" id="NF001859">
    <property type="entry name" value="PRK00591.1"/>
    <property type="match status" value="1"/>
</dbReference>
<dbReference type="PANTHER" id="PTHR43804">
    <property type="entry name" value="LD18447P"/>
    <property type="match status" value="1"/>
</dbReference>
<dbReference type="PANTHER" id="PTHR43804:SF7">
    <property type="entry name" value="LD18447P"/>
    <property type="match status" value="1"/>
</dbReference>
<dbReference type="Pfam" id="PF03462">
    <property type="entry name" value="PCRF"/>
    <property type="match status" value="1"/>
</dbReference>
<dbReference type="Pfam" id="PF00472">
    <property type="entry name" value="RF-1"/>
    <property type="match status" value="1"/>
</dbReference>
<dbReference type="SMART" id="SM00937">
    <property type="entry name" value="PCRF"/>
    <property type="match status" value="1"/>
</dbReference>
<dbReference type="SUPFAM" id="SSF75620">
    <property type="entry name" value="Release factor"/>
    <property type="match status" value="1"/>
</dbReference>
<dbReference type="PROSITE" id="PS00745">
    <property type="entry name" value="RF_PROK_I"/>
    <property type="match status" value="1"/>
</dbReference>
<protein>
    <recommendedName>
        <fullName evidence="1">Peptide chain release factor 1</fullName>
        <shortName evidence="1">RF-1</shortName>
    </recommendedName>
</protein>
<name>RF1_COLP3</name>
<sequence>MKSSVYQKLEVLVERFEEVQALLSDPATISDQEKFRALSKEFKQLDAVTSVFNNYKSAEDDFSTAELMLKDDDPDMREMAQEEFKDAKKAVADIADELQILLLPRDPNDDNNCFVEIRAGAGGDEAAIFAGDLFRMYSRYAEKKGWKIEVMNSNESEQGGYKELIMKVNGEGVFGHMKFESGGHRVQRVPATESQGRVHTSACTVVVMPEIPEADAIEINKADLKVDTFRASGAGGQHVNKTDSAIRITHIPTGVVVECQEQRSQHKNRAQAMSVLQARLQQAEDEKRRSEEESSRRNLVASGDRSERIRTYNFPQGRMSDHRINLTLYRLNEIMEGSLQLVMEPIMQENQADLLAELAEQH</sequence>
<feature type="chain" id="PRO_0000263258" description="Peptide chain release factor 1">
    <location>
        <begin position="1"/>
        <end position="362"/>
    </location>
</feature>
<feature type="region of interest" description="Disordered" evidence="2">
    <location>
        <begin position="279"/>
        <end position="305"/>
    </location>
</feature>
<feature type="compositionally biased region" description="Basic and acidic residues" evidence="2">
    <location>
        <begin position="282"/>
        <end position="296"/>
    </location>
</feature>
<feature type="modified residue" description="N5-methylglutamine" evidence="1">
    <location>
        <position position="237"/>
    </location>
</feature>
<reference key="1">
    <citation type="journal article" date="2005" name="Proc. Natl. Acad. Sci. U.S.A.">
        <title>The psychrophilic lifestyle as revealed by the genome sequence of Colwellia psychrerythraea 34H through genomic and proteomic analyses.</title>
        <authorList>
            <person name="Methe B.A."/>
            <person name="Nelson K.E."/>
            <person name="Deming J.W."/>
            <person name="Momen B."/>
            <person name="Melamud E."/>
            <person name="Zhang X."/>
            <person name="Moult J."/>
            <person name="Madupu R."/>
            <person name="Nelson W.C."/>
            <person name="Dodson R.J."/>
            <person name="Brinkac L.M."/>
            <person name="Daugherty S.C."/>
            <person name="Durkin A.S."/>
            <person name="DeBoy R.T."/>
            <person name="Kolonay J.F."/>
            <person name="Sullivan S.A."/>
            <person name="Zhou L."/>
            <person name="Davidsen T.M."/>
            <person name="Wu M."/>
            <person name="Huston A.L."/>
            <person name="Lewis M."/>
            <person name="Weaver B."/>
            <person name="Weidman J.F."/>
            <person name="Khouri H."/>
            <person name="Utterback T.R."/>
            <person name="Feldblyum T.V."/>
            <person name="Fraser C.M."/>
        </authorList>
    </citation>
    <scope>NUCLEOTIDE SEQUENCE [LARGE SCALE GENOMIC DNA]</scope>
    <source>
        <strain>34H / ATCC BAA-681</strain>
    </source>
</reference>
<keyword id="KW-0963">Cytoplasm</keyword>
<keyword id="KW-0488">Methylation</keyword>
<keyword id="KW-0648">Protein biosynthesis</keyword>
<organism>
    <name type="scientific">Colwellia psychrerythraea (strain 34H / ATCC BAA-681)</name>
    <name type="common">Vibrio psychroerythus</name>
    <dbReference type="NCBI Taxonomy" id="167879"/>
    <lineage>
        <taxon>Bacteria</taxon>
        <taxon>Pseudomonadati</taxon>
        <taxon>Pseudomonadota</taxon>
        <taxon>Gammaproteobacteria</taxon>
        <taxon>Alteromonadales</taxon>
        <taxon>Colwelliaceae</taxon>
        <taxon>Colwellia</taxon>
    </lineage>
</organism>
<proteinExistence type="inferred from homology"/>
<accession>Q47Y94</accession>
<gene>
    <name evidence="1" type="primary">prfA</name>
    <name type="ordered locus">CPS_3552</name>
</gene>
<comment type="function">
    <text evidence="1">Peptide chain release factor 1 directs the termination of translation in response to the peptide chain termination codons UAG and UAA.</text>
</comment>
<comment type="subcellular location">
    <subcellularLocation>
        <location evidence="1">Cytoplasm</location>
    </subcellularLocation>
</comment>
<comment type="PTM">
    <text evidence="1">Methylated by PrmC. Methylation increases the termination efficiency of RF1.</text>
</comment>
<comment type="similarity">
    <text evidence="1">Belongs to the prokaryotic/mitochondrial release factor family.</text>
</comment>
<evidence type="ECO:0000255" key="1">
    <source>
        <dbReference type="HAMAP-Rule" id="MF_00093"/>
    </source>
</evidence>
<evidence type="ECO:0000256" key="2">
    <source>
        <dbReference type="SAM" id="MobiDB-lite"/>
    </source>
</evidence>